<comment type="function">
    <text evidence="8">Receptor tyrosine kinase which binds promiscuously transmembrane ephrin-B family ligands residing on adjacent cells, leading to contact-dependent bidirectional signaling into neighboring cells. The signaling pathway downstream of the receptor is referred to as forward signaling while the signaling pathway downstream of the ephrin ligand is referred to as reverse signaling. May play a role in axon guidance during nervous system development. May also play an important redundant role with other ephrin-B receptors in development and maturation of dendritic spines and synapse formation. More generally, may play a role in targeted cell migration and adhesion. Upon activation by ephrin-B ligands activates the MAPK/ERK and the JNK signaling cascades to regulate cell migration and adhesion respectively.</text>
</comment>
<comment type="catalytic activity">
    <reaction evidence="7">
        <text>L-tyrosyl-[protein] + ATP = O-phospho-L-tyrosyl-[protein] + ADP + H(+)</text>
        <dbReference type="Rhea" id="RHEA:10596"/>
        <dbReference type="Rhea" id="RHEA-COMP:10136"/>
        <dbReference type="Rhea" id="RHEA-COMP:20101"/>
        <dbReference type="ChEBI" id="CHEBI:15378"/>
        <dbReference type="ChEBI" id="CHEBI:30616"/>
        <dbReference type="ChEBI" id="CHEBI:46858"/>
        <dbReference type="ChEBI" id="CHEBI:61978"/>
        <dbReference type="ChEBI" id="CHEBI:456216"/>
        <dbReference type="EC" id="2.7.10.1"/>
    </reaction>
</comment>
<comment type="subunit">
    <text evidence="1">Heterotetramer upon binding of the ligand. The heterotetramer is composed of an ephrin dimer and a receptor dimer. Oligomerization is probably required to induce biological responses (By similarity).</text>
</comment>
<comment type="subcellular location">
    <subcellularLocation>
        <location evidence="1">Cell membrane</location>
        <topology>Single-pass type I membrane protein</topology>
    </subcellularLocation>
    <subcellularLocation>
        <location evidence="1">Early endosome membrane</location>
    </subcellularLocation>
    <subcellularLocation>
        <location evidence="1">Cell projection</location>
        <location evidence="1">Dendrite</location>
    </subcellularLocation>
</comment>
<comment type="developmental stage">
    <text>Maternally expressed, it decreases at mid blastula transition and reappears at late neurulation. Expressed at higher levels in the anterior and dorsal regions of embryonic stages 16, 24 and 37. In adult it appears to be ubiquitously expressed with higher expression in brain and ovary. Expression in the brain, brachial arches, trigeminal facial ganglion, and the retina of swimming tadpole stage of development.</text>
</comment>
<comment type="PTM">
    <text evidence="1">Phosphorylated. Autophosphorylation is stimulated by ligands (By similarity).</text>
</comment>
<comment type="similarity">
    <text evidence="3">Belongs to the protein kinase superfamily. Tyr protein kinase family. Ephrin receptor subfamily.</text>
</comment>
<proteinExistence type="evidence at protein level"/>
<protein>
    <recommendedName>
        <fullName>Ephrin type-B receptor 1-A</fullName>
        <ecNumber>2.7.10.1</ecNumber>
    </recommendedName>
    <alternativeName>
        <fullName>Tyrosine-protein kinase receptor XEK</fullName>
    </alternativeName>
</protein>
<keyword id="KW-0067">ATP-binding</keyword>
<keyword id="KW-0130">Cell adhesion</keyword>
<keyword id="KW-1003">Cell membrane</keyword>
<keyword id="KW-0966">Cell projection</keyword>
<keyword id="KW-0967">Endosome</keyword>
<keyword id="KW-0325">Glycoprotein</keyword>
<keyword id="KW-0418">Kinase</keyword>
<keyword id="KW-0472">Membrane</keyword>
<keyword id="KW-0524">Neurogenesis</keyword>
<keyword id="KW-0547">Nucleotide-binding</keyword>
<keyword id="KW-0597">Phosphoprotein</keyword>
<keyword id="KW-0675">Receptor</keyword>
<keyword id="KW-1185">Reference proteome</keyword>
<keyword id="KW-0677">Repeat</keyword>
<keyword id="KW-0732">Signal</keyword>
<keyword id="KW-0808">Transferase</keyword>
<keyword id="KW-0812">Transmembrane</keyword>
<keyword id="KW-1133">Transmembrane helix</keyword>
<keyword id="KW-0829">Tyrosine-protein kinase</keyword>
<evidence type="ECO:0000250" key="1"/>
<evidence type="ECO:0000255" key="2"/>
<evidence type="ECO:0000255" key="3">
    <source>
        <dbReference type="PROSITE-ProRule" id="PRU00159"/>
    </source>
</evidence>
<evidence type="ECO:0000255" key="4">
    <source>
        <dbReference type="PROSITE-ProRule" id="PRU00184"/>
    </source>
</evidence>
<evidence type="ECO:0000255" key="5">
    <source>
        <dbReference type="PROSITE-ProRule" id="PRU00316"/>
    </source>
</evidence>
<evidence type="ECO:0000255" key="6">
    <source>
        <dbReference type="PROSITE-ProRule" id="PRU00883"/>
    </source>
</evidence>
<evidence type="ECO:0000255" key="7">
    <source>
        <dbReference type="PROSITE-ProRule" id="PRU10028"/>
    </source>
</evidence>
<evidence type="ECO:0000269" key="8">
    <source>
    </source>
</evidence>
<dbReference type="EC" id="2.7.10.1"/>
<dbReference type="EMBL" id="U14164">
    <property type="protein sequence ID" value="AAA74888.1"/>
    <property type="molecule type" value="mRNA"/>
</dbReference>
<dbReference type="PIR" id="I51672">
    <property type="entry name" value="I51672"/>
</dbReference>
<dbReference type="RefSeq" id="NP_001084070.1">
    <property type="nucleotide sequence ID" value="NM_001090601.1"/>
</dbReference>
<dbReference type="SMR" id="Q91571"/>
<dbReference type="GlyCosmos" id="Q91571">
    <property type="glycosylation" value="3 sites, No reported glycans"/>
</dbReference>
<dbReference type="GeneID" id="399288"/>
<dbReference type="CTD" id="399288"/>
<dbReference type="BRENDA" id="2.7.10.1">
    <property type="organism ID" value="6725"/>
</dbReference>
<dbReference type="Proteomes" id="UP000186698">
    <property type="component" value="Unplaced"/>
</dbReference>
<dbReference type="GO" id="GO:0030425">
    <property type="term" value="C:dendrite"/>
    <property type="evidence" value="ECO:0000318"/>
    <property type="project" value="GO_Central"/>
</dbReference>
<dbReference type="GO" id="GO:0031901">
    <property type="term" value="C:early endosome membrane"/>
    <property type="evidence" value="ECO:0000250"/>
    <property type="project" value="UniProtKB"/>
</dbReference>
<dbReference type="GO" id="GO:0005886">
    <property type="term" value="C:plasma membrane"/>
    <property type="evidence" value="ECO:0000250"/>
    <property type="project" value="UniProtKB"/>
</dbReference>
<dbReference type="GO" id="GO:0005524">
    <property type="term" value="F:ATP binding"/>
    <property type="evidence" value="ECO:0007669"/>
    <property type="project" value="UniProtKB-KW"/>
</dbReference>
<dbReference type="GO" id="GO:0005005">
    <property type="term" value="F:transmembrane-ephrin receptor activity"/>
    <property type="evidence" value="ECO:0000250"/>
    <property type="project" value="UniProtKB"/>
</dbReference>
<dbReference type="GO" id="GO:0007411">
    <property type="term" value="P:axon guidance"/>
    <property type="evidence" value="ECO:0000250"/>
    <property type="project" value="UniProtKB"/>
</dbReference>
<dbReference type="GO" id="GO:0060326">
    <property type="term" value="P:cell chemotaxis"/>
    <property type="evidence" value="ECO:0000250"/>
    <property type="project" value="UniProtKB"/>
</dbReference>
<dbReference type="GO" id="GO:0031589">
    <property type="term" value="P:cell-substrate adhesion"/>
    <property type="evidence" value="ECO:0000250"/>
    <property type="project" value="UniProtKB"/>
</dbReference>
<dbReference type="GO" id="GO:0060996">
    <property type="term" value="P:dendritic spine development"/>
    <property type="evidence" value="ECO:0000250"/>
    <property type="project" value="UniProtKB"/>
</dbReference>
<dbReference type="GO" id="GO:0060997">
    <property type="term" value="P:dendritic spine morphogenesis"/>
    <property type="evidence" value="ECO:0000250"/>
    <property type="project" value="UniProtKB"/>
</dbReference>
<dbReference type="GO" id="GO:0048013">
    <property type="term" value="P:ephrin receptor signaling pathway"/>
    <property type="evidence" value="ECO:0000250"/>
    <property type="project" value="UniProtKB"/>
</dbReference>
<dbReference type="GO" id="GO:0030010">
    <property type="term" value="P:establishment of cell polarity"/>
    <property type="evidence" value="ECO:0000250"/>
    <property type="project" value="UniProtKB"/>
</dbReference>
<dbReference type="GO" id="GO:0051965">
    <property type="term" value="P:positive regulation of synapse assembly"/>
    <property type="evidence" value="ECO:0000250"/>
    <property type="project" value="UniProtKB"/>
</dbReference>
<dbReference type="GO" id="GO:0046777">
    <property type="term" value="P:protein autophosphorylation"/>
    <property type="evidence" value="ECO:0000250"/>
    <property type="project" value="UniProtKB"/>
</dbReference>
<dbReference type="GO" id="GO:0070372">
    <property type="term" value="P:regulation of ERK1 and ERK2 cascade"/>
    <property type="evidence" value="ECO:0000250"/>
    <property type="project" value="UniProtKB"/>
</dbReference>
<dbReference type="GO" id="GO:0046328">
    <property type="term" value="P:regulation of JNK cascade"/>
    <property type="evidence" value="ECO:0000250"/>
    <property type="project" value="UniProtKB"/>
</dbReference>
<dbReference type="CDD" id="cd10476">
    <property type="entry name" value="EphR_LBD_B1"/>
    <property type="match status" value="1"/>
</dbReference>
<dbReference type="CDD" id="cd00063">
    <property type="entry name" value="FN3"/>
    <property type="match status" value="2"/>
</dbReference>
<dbReference type="CDD" id="cd05065">
    <property type="entry name" value="PTKc_EphR_B"/>
    <property type="match status" value="1"/>
</dbReference>
<dbReference type="CDD" id="cd09551">
    <property type="entry name" value="SAM_EPH-B1"/>
    <property type="match status" value="1"/>
</dbReference>
<dbReference type="FunFam" id="2.60.40.10:FF:000041">
    <property type="entry name" value="ephrin type-A receptor 3"/>
    <property type="match status" value="1"/>
</dbReference>
<dbReference type="FunFam" id="1.10.150.50:FF:000001">
    <property type="entry name" value="Ephrin type-A receptor 5"/>
    <property type="match status" value="1"/>
</dbReference>
<dbReference type="FunFam" id="2.10.50.10:FF:000001">
    <property type="entry name" value="Ephrin type-A receptor 5"/>
    <property type="match status" value="1"/>
</dbReference>
<dbReference type="FunFam" id="2.60.40.1770:FF:000001">
    <property type="entry name" value="Ephrin type-A receptor 5"/>
    <property type="match status" value="1"/>
</dbReference>
<dbReference type="FunFam" id="3.30.200.20:FF:000001">
    <property type="entry name" value="Ephrin type-A receptor 5"/>
    <property type="match status" value="1"/>
</dbReference>
<dbReference type="FunFam" id="1.10.510.10:FF:000015">
    <property type="entry name" value="Ephrin type-B receptor 2"/>
    <property type="match status" value="1"/>
</dbReference>
<dbReference type="FunFam" id="2.60.120.260:FF:000004">
    <property type="entry name" value="Ephrin type-B receptor 2"/>
    <property type="match status" value="1"/>
</dbReference>
<dbReference type="FunFam" id="2.60.40.10:FF:000110">
    <property type="entry name" value="Ephrin type-B receptor 2"/>
    <property type="match status" value="1"/>
</dbReference>
<dbReference type="Gene3D" id="2.60.40.1770">
    <property type="entry name" value="ephrin a2 ectodomain"/>
    <property type="match status" value="1"/>
</dbReference>
<dbReference type="Gene3D" id="2.60.120.260">
    <property type="entry name" value="Galactose-binding domain-like"/>
    <property type="match status" value="1"/>
</dbReference>
<dbReference type="Gene3D" id="2.60.40.10">
    <property type="entry name" value="Immunoglobulins"/>
    <property type="match status" value="2"/>
</dbReference>
<dbReference type="Gene3D" id="3.30.200.20">
    <property type="entry name" value="Phosphorylase Kinase, domain 1"/>
    <property type="match status" value="1"/>
</dbReference>
<dbReference type="Gene3D" id="1.10.150.50">
    <property type="entry name" value="Transcription Factor, Ets-1"/>
    <property type="match status" value="1"/>
</dbReference>
<dbReference type="Gene3D" id="1.10.510.10">
    <property type="entry name" value="Transferase(Phosphotransferase) domain 1"/>
    <property type="match status" value="1"/>
</dbReference>
<dbReference type="Gene3D" id="2.10.50.10">
    <property type="entry name" value="Tumor Necrosis Factor Receptor, subunit A, domain 2"/>
    <property type="match status" value="1"/>
</dbReference>
<dbReference type="InterPro" id="IPR027936">
    <property type="entry name" value="Eph_TM"/>
</dbReference>
<dbReference type="InterPro" id="IPR034231">
    <property type="entry name" value="EphB1_rcpt_lig-bd"/>
</dbReference>
<dbReference type="InterPro" id="IPR042819">
    <property type="entry name" value="EphB1_SAM"/>
</dbReference>
<dbReference type="InterPro" id="IPR001090">
    <property type="entry name" value="Ephrin_rcpt_lig-bd_dom"/>
</dbReference>
<dbReference type="InterPro" id="IPR050449">
    <property type="entry name" value="Ephrin_rcpt_TKs"/>
</dbReference>
<dbReference type="InterPro" id="IPR003961">
    <property type="entry name" value="FN3_dom"/>
</dbReference>
<dbReference type="InterPro" id="IPR036116">
    <property type="entry name" value="FN3_sf"/>
</dbReference>
<dbReference type="InterPro" id="IPR008979">
    <property type="entry name" value="Galactose-bd-like_sf"/>
</dbReference>
<dbReference type="InterPro" id="IPR009030">
    <property type="entry name" value="Growth_fac_rcpt_cys_sf"/>
</dbReference>
<dbReference type="InterPro" id="IPR013783">
    <property type="entry name" value="Ig-like_fold"/>
</dbReference>
<dbReference type="InterPro" id="IPR011009">
    <property type="entry name" value="Kinase-like_dom_sf"/>
</dbReference>
<dbReference type="InterPro" id="IPR000719">
    <property type="entry name" value="Prot_kinase_dom"/>
</dbReference>
<dbReference type="InterPro" id="IPR017441">
    <property type="entry name" value="Protein_kinase_ATP_BS"/>
</dbReference>
<dbReference type="InterPro" id="IPR001660">
    <property type="entry name" value="SAM"/>
</dbReference>
<dbReference type="InterPro" id="IPR013761">
    <property type="entry name" value="SAM/pointed_sf"/>
</dbReference>
<dbReference type="InterPro" id="IPR001245">
    <property type="entry name" value="Ser-Thr/Tyr_kinase_cat_dom"/>
</dbReference>
<dbReference type="InterPro" id="IPR008266">
    <property type="entry name" value="Tyr_kinase_AS"/>
</dbReference>
<dbReference type="InterPro" id="IPR020635">
    <property type="entry name" value="Tyr_kinase_cat_dom"/>
</dbReference>
<dbReference type="InterPro" id="IPR016257">
    <property type="entry name" value="Tyr_kinase_ephrin_rcpt"/>
</dbReference>
<dbReference type="InterPro" id="IPR001426">
    <property type="entry name" value="Tyr_kinase_rcpt_V_CS"/>
</dbReference>
<dbReference type="PANTHER" id="PTHR46877">
    <property type="entry name" value="EPH RECEPTOR A5"/>
    <property type="match status" value="1"/>
</dbReference>
<dbReference type="PANTHER" id="PTHR46877:SF17">
    <property type="entry name" value="EPHRIN TYPE-B RECEPTOR 1"/>
    <property type="match status" value="1"/>
</dbReference>
<dbReference type="Pfam" id="PF14575">
    <property type="entry name" value="EphA2_TM"/>
    <property type="match status" value="1"/>
</dbReference>
<dbReference type="Pfam" id="PF01404">
    <property type="entry name" value="Ephrin_lbd"/>
    <property type="match status" value="1"/>
</dbReference>
<dbReference type="Pfam" id="PF00041">
    <property type="entry name" value="fn3"/>
    <property type="match status" value="2"/>
</dbReference>
<dbReference type="Pfam" id="PF07714">
    <property type="entry name" value="PK_Tyr_Ser-Thr"/>
    <property type="match status" value="1"/>
</dbReference>
<dbReference type="Pfam" id="PF00536">
    <property type="entry name" value="SAM_1"/>
    <property type="match status" value="1"/>
</dbReference>
<dbReference type="PIRSF" id="PIRSF000666">
    <property type="entry name" value="TyrPK_ephrin_receptor"/>
    <property type="match status" value="1"/>
</dbReference>
<dbReference type="PRINTS" id="PR00109">
    <property type="entry name" value="TYRKINASE"/>
</dbReference>
<dbReference type="SMART" id="SM00615">
    <property type="entry name" value="EPH_lbd"/>
    <property type="match status" value="1"/>
</dbReference>
<dbReference type="SMART" id="SM01411">
    <property type="entry name" value="Ephrin_rec_like"/>
    <property type="match status" value="1"/>
</dbReference>
<dbReference type="SMART" id="SM00060">
    <property type="entry name" value="FN3"/>
    <property type="match status" value="2"/>
</dbReference>
<dbReference type="SMART" id="SM00454">
    <property type="entry name" value="SAM"/>
    <property type="match status" value="1"/>
</dbReference>
<dbReference type="SMART" id="SM00219">
    <property type="entry name" value="TyrKc"/>
    <property type="match status" value="1"/>
</dbReference>
<dbReference type="SUPFAM" id="SSF49265">
    <property type="entry name" value="Fibronectin type III"/>
    <property type="match status" value="1"/>
</dbReference>
<dbReference type="SUPFAM" id="SSF49785">
    <property type="entry name" value="Galactose-binding domain-like"/>
    <property type="match status" value="1"/>
</dbReference>
<dbReference type="SUPFAM" id="SSF57184">
    <property type="entry name" value="Growth factor receptor domain"/>
    <property type="match status" value="1"/>
</dbReference>
<dbReference type="SUPFAM" id="SSF56112">
    <property type="entry name" value="Protein kinase-like (PK-like)"/>
    <property type="match status" value="1"/>
</dbReference>
<dbReference type="SUPFAM" id="SSF47769">
    <property type="entry name" value="SAM/Pointed domain"/>
    <property type="match status" value="1"/>
</dbReference>
<dbReference type="PROSITE" id="PS01186">
    <property type="entry name" value="EGF_2"/>
    <property type="match status" value="1"/>
</dbReference>
<dbReference type="PROSITE" id="PS51550">
    <property type="entry name" value="EPH_LBD"/>
    <property type="match status" value="1"/>
</dbReference>
<dbReference type="PROSITE" id="PS50853">
    <property type="entry name" value="FN3"/>
    <property type="match status" value="2"/>
</dbReference>
<dbReference type="PROSITE" id="PS00107">
    <property type="entry name" value="PROTEIN_KINASE_ATP"/>
    <property type="match status" value="1"/>
</dbReference>
<dbReference type="PROSITE" id="PS50011">
    <property type="entry name" value="PROTEIN_KINASE_DOM"/>
    <property type="match status" value="1"/>
</dbReference>
<dbReference type="PROSITE" id="PS00109">
    <property type="entry name" value="PROTEIN_KINASE_TYR"/>
    <property type="match status" value="1"/>
</dbReference>
<dbReference type="PROSITE" id="PS00791">
    <property type="entry name" value="RECEPTOR_TYR_KIN_V_2"/>
    <property type="match status" value="1"/>
</dbReference>
<dbReference type="PROSITE" id="PS50105">
    <property type="entry name" value="SAM_DOMAIN"/>
    <property type="match status" value="1"/>
</dbReference>
<gene>
    <name type="primary">ephb1-a</name>
    <name type="synonym">xek</name>
</gene>
<organism>
    <name type="scientific">Xenopus laevis</name>
    <name type="common">African clawed frog</name>
    <dbReference type="NCBI Taxonomy" id="8355"/>
    <lineage>
        <taxon>Eukaryota</taxon>
        <taxon>Metazoa</taxon>
        <taxon>Chordata</taxon>
        <taxon>Craniata</taxon>
        <taxon>Vertebrata</taxon>
        <taxon>Euteleostomi</taxon>
        <taxon>Amphibia</taxon>
        <taxon>Batrachia</taxon>
        <taxon>Anura</taxon>
        <taxon>Pipoidea</taxon>
        <taxon>Pipidae</taxon>
        <taxon>Xenopodinae</taxon>
        <taxon>Xenopus</taxon>
        <taxon>Xenopus</taxon>
    </lineage>
</organism>
<name>EPB1A_XENLA</name>
<accession>Q91571</accession>
<reference key="1">
    <citation type="journal article" date="1995" name="Oncogene">
        <title>Expression of an amphibian homolog of the Eph family of receptor tyrosine kinases is developmentally regulated.</title>
        <authorList>
            <person name="Jones T.L."/>
            <person name="Karavanova I."/>
            <person name="Maeno M."/>
            <person name="Ong R.C."/>
            <person name="Kung H.-F."/>
            <person name="Daar I.O."/>
        </authorList>
    </citation>
    <scope>NUCLEOTIDE SEQUENCE [MRNA]</scope>
</reference>
<reference key="2">
    <citation type="journal article" date="1997" name="Curr. Biol.">
        <title>The EphA4 and EphB1 receptor tyrosine kinases and ephrin-B2 ligand regulate targeted migration of branchial neural crest cells.</title>
        <authorList>
            <person name="Smith A."/>
            <person name="Robinson V."/>
            <person name="Patel K."/>
            <person name="Wilkinson D.G."/>
        </authorList>
    </citation>
    <scope>FUNCTION IN TARGETED CELL MIGRATION</scope>
</reference>
<sequence>MELNVLLLLLCLSGGQVGAVEETLMDTRTATAELGWTANPSSGWEEVSGYDENLNTIRTYQVCNVFGPKQNNWLLTTFIPRRGAHRVYVEMRFTVRDCSSLPNVPGSCKETFNLYYYETDSNIENKISTFWNESPYLKVDTIAADESFSQVDFGGRLMKVNTEVRSFGPLTRSGFYLAFQDYGACMSLLSVRVFFKEMPSVVQNLLVFPETMTGAESTSLVIARGTCIPNAEEVDVPIKLYCNGDGEWMVPIGKCTCKAGYEPENHVVCKACPAAMFKANQGMGICAQCPANSRSTSEASPICICRNGYYRADFDTPEAPCTSVPSGPRNVISIVNETAITLEWHPPRETGGRDDVDYNIVCKKCRADRRACSRCDDNVDFVPRQLGLTDTRVFISNLWAHTPYTFETQAVNGVTNKSPFPPQHVSVNITTNQAAPSSVPIMHQVKATMKSITLSWPQQEQPNGIILDYEIRYYEKDHHEFNSSLARSQTNTARRTGGRVWMFMSVQVRARTVAGYGKFSSKCGFQTLTAEDYKSELREQLPLTGSAAAGVVFIVSLVAISIVCSRKRTYSKEAVYSDKLQHYSTGRGSPGMKIYIDPFTYEDPNEAVREFAKEIDVSFVKIEEVIGAGEFGEVYKGRLKLPSKREISVAIKTLKAGYSEKQRRDFLSEASIMGQFDHPNIIRLEGVVTKSRPVMIITEFMENGALDSFLRQNDGQFTVIQLVGMLRGIAAGMKYLSEMNYVHRDLAARNILVNSNLVCKVSDFGLSRYLQDDTSDPTYTSSLGGKIPVRWTAQEAIAYRKFTSASDVWSYGIVMWEVMSYGERPYWTMSNQDVINAIEQDYRLPPPMDCPAALHQLMLDCWQKDRNSRPRLAEIVNTLRPMIRNPASLKTVATIPAVPSQPLLDRSIPDISAFTSVDDWLSAIKMGQYRDNFLSSGFTSLQLVAQMTSEDLLRIGITLAGHQKKILNSIQSMRVQITQSPTSIA</sequence>
<feature type="signal peptide" evidence="2">
    <location>
        <begin position="1"/>
        <end position="19"/>
    </location>
</feature>
<feature type="chain" id="PRO_0000016826" description="Ephrin type-B receptor 1-A">
    <location>
        <begin position="20"/>
        <end position="985"/>
    </location>
</feature>
<feature type="topological domain" description="Extracellular" evidence="2">
    <location>
        <begin position="20"/>
        <end position="542"/>
    </location>
</feature>
<feature type="transmembrane region" description="Helical" evidence="2">
    <location>
        <begin position="543"/>
        <end position="563"/>
    </location>
</feature>
<feature type="topological domain" description="Cytoplasmic" evidence="2">
    <location>
        <begin position="564"/>
        <end position="985"/>
    </location>
</feature>
<feature type="domain" description="Eph LBD" evidence="6">
    <location>
        <begin position="21"/>
        <end position="203"/>
    </location>
</feature>
<feature type="domain" description="Fibronectin type-III 1" evidence="5">
    <location>
        <begin position="324"/>
        <end position="434"/>
    </location>
</feature>
<feature type="domain" description="Fibronectin type-III 2" evidence="5">
    <location>
        <begin position="435"/>
        <end position="532"/>
    </location>
</feature>
<feature type="domain" description="Protein kinase" evidence="3">
    <location>
        <begin position="620"/>
        <end position="883"/>
    </location>
</feature>
<feature type="domain" description="SAM" evidence="4">
    <location>
        <begin position="912"/>
        <end position="976"/>
    </location>
</feature>
<feature type="short sequence motif" description="PDZ-binding" evidence="2">
    <location>
        <begin position="983"/>
        <end position="985"/>
    </location>
</feature>
<feature type="active site" description="Proton acceptor" evidence="3 7">
    <location>
        <position position="745"/>
    </location>
</feature>
<feature type="binding site" evidence="3">
    <location>
        <begin position="626"/>
        <end position="634"/>
    </location>
    <ligand>
        <name>ATP</name>
        <dbReference type="ChEBI" id="CHEBI:30616"/>
    </ligand>
</feature>
<feature type="binding site" evidence="3">
    <location>
        <position position="652"/>
    </location>
    <ligand>
        <name>ATP</name>
        <dbReference type="ChEBI" id="CHEBI:30616"/>
    </ligand>
</feature>
<feature type="glycosylation site" description="N-linked (GlcNAc...) asparagine" evidence="2">
    <location>
        <position position="336"/>
    </location>
</feature>
<feature type="glycosylation site" description="N-linked (GlcNAc...) asparagine" evidence="2">
    <location>
        <position position="428"/>
    </location>
</feature>
<feature type="glycosylation site" description="N-linked (GlcNAc...) asparagine" evidence="2">
    <location>
        <position position="482"/>
    </location>
</feature>